<proteinExistence type="evidence at transcript level"/>
<feature type="chain" id="PRO_0000127180" description="Factor in the germline alpha">
    <location>
        <begin position="1"/>
        <end position="194"/>
    </location>
</feature>
<feature type="domain" description="bHLH" evidence="1">
    <location>
        <begin position="59"/>
        <end position="111"/>
    </location>
</feature>
<feature type="region of interest" description="Disordered" evidence="2">
    <location>
        <begin position="121"/>
        <end position="163"/>
    </location>
</feature>
<feature type="compositionally biased region" description="Basic and acidic residues" evidence="2">
    <location>
        <begin position="121"/>
        <end position="137"/>
    </location>
</feature>
<feature type="compositionally biased region" description="Polar residues" evidence="2">
    <location>
        <begin position="139"/>
        <end position="157"/>
    </location>
</feature>
<name>FIGLA_MOUSE</name>
<keyword id="KW-0217">Developmental protein</keyword>
<keyword id="KW-0221">Differentiation</keyword>
<keyword id="KW-0238">DNA-binding</keyword>
<keyword id="KW-0539">Nucleus</keyword>
<keyword id="KW-0896">Oogenesis</keyword>
<keyword id="KW-1185">Reference proteome</keyword>
<keyword id="KW-0804">Transcription</keyword>
<keyword id="KW-0805">Transcription regulation</keyword>
<protein>
    <recommendedName>
        <fullName>Factor in the germline alpha</fullName>
        <shortName>FIGalpha</shortName>
    </recommendedName>
    <alternativeName>
        <fullName>Transcription factor FIGa</fullName>
    </alternativeName>
</protein>
<organism>
    <name type="scientific">Mus musculus</name>
    <name type="common">Mouse</name>
    <dbReference type="NCBI Taxonomy" id="10090"/>
    <lineage>
        <taxon>Eukaryota</taxon>
        <taxon>Metazoa</taxon>
        <taxon>Chordata</taxon>
        <taxon>Craniata</taxon>
        <taxon>Vertebrata</taxon>
        <taxon>Euteleostomi</taxon>
        <taxon>Mammalia</taxon>
        <taxon>Eutheria</taxon>
        <taxon>Euarchontoglires</taxon>
        <taxon>Glires</taxon>
        <taxon>Rodentia</taxon>
        <taxon>Myomorpha</taxon>
        <taxon>Muroidea</taxon>
        <taxon>Muridae</taxon>
        <taxon>Murinae</taxon>
        <taxon>Mus</taxon>
        <taxon>Mus</taxon>
    </lineage>
</organism>
<sequence>MDTAPASPEPFLVTPQAEVLEELIQAQMGPLPRLAAICRLKRLPSGGYSTTDDLHLVLERRRVANAKERERIKNLNRGFAKLKALVPFLPQSRKPSKVDILKGATEYIQILGCVLEEAKVSEKQSPEEQTHSGRPSDPHVSSTRELLGNATQPTSCASGLKKEEEGPWAYAGHSEPLYSYHQSTVPETRSYFTH</sequence>
<evidence type="ECO:0000255" key="1">
    <source>
        <dbReference type="PROSITE-ProRule" id="PRU00981"/>
    </source>
</evidence>
<evidence type="ECO:0000256" key="2">
    <source>
        <dbReference type="SAM" id="MobiDB-lite"/>
    </source>
</evidence>
<evidence type="ECO:0000269" key="3">
    <source>
    </source>
</evidence>
<evidence type="ECO:0000305" key="4"/>
<dbReference type="EMBL" id="U91840">
    <property type="protein sequence ID" value="AAB97139.1"/>
    <property type="molecule type" value="mRNA"/>
</dbReference>
<dbReference type="CCDS" id="CCDS20307.1"/>
<dbReference type="RefSeq" id="NP_036143.1">
    <property type="nucleotide sequence ID" value="NM_012013.2"/>
</dbReference>
<dbReference type="SMR" id="O55208"/>
<dbReference type="FunCoup" id="O55208">
    <property type="interactions" value="90"/>
</dbReference>
<dbReference type="STRING" id="10090.ENSMUSP00000032070"/>
<dbReference type="PhosphoSitePlus" id="O55208"/>
<dbReference type="PaxDb" id="10090-ENSMUSP00000032070"/>
<dbReference type="Antibodypedia" id="31154">
    <property type="antibodies" value="85 antibodies from 19 providers"/>
</dbReference>
<dbReference type="DNASU" id="26910"/>
<dbReference type="Ensembl" id="ENSMUST00000032070.4">
    <property type="protein sequence ID" value="ENSMUSP00000032070.4"/>
    <property type="gene ID" value="ENSMUSG00000030001.5"/>
</dbReference>
<dbReference type="GeneID" id="26910"/>
<dbReference type="KEGG" id="mmu:26910"/>
<dbReference type="UCSC" id="uc009crb.1">
    <property type="organism name" value="mouse"/>
</dbReference>
<dbReference type="AGR" id="MGI:1349421"/>
<dbReference type="CTD" id="344018"/>
<dbReference type="MGI" id="MGI:1349421">
    <property type="gene designation" value="Figla"/>
</dbReference>
<dbReference type="VEuPathDB" id="HostDB:ENSMUSG00000030001"/>
<dbReference type="eggNOG" id="KOG4029">
    <property type="taxonomic scope" value="Eukaryota"/>
</dbReference>
<dbReference type="GeneTree" id="ENSGT00440000033552"/>
<dbReference type="HOGENOM" id="CLU_1380972_0_0_1"/>
<dbReference type="InParanoid" id="O55208"/>
<dbReference type="OMA" id="PDKQNYS"/>
<dbReference type="OrthoDB" id="5976910at2759"/>
<dbReference type="PhylomeDB" id="O55208"/>
<dbReference type="TreeFam" id="TF351992"/>
<dbReference type="BioGRID-ORCS" id="26910">
    <property type="hits" value="2 hits in 75 CRISPR screens"/>
</dbReference>
<dbReference type="PRO" id="PR:O55208"/>
<dbReference type="Proteomes" id="UP000000589">
    <property type="component" value="Chromosome 6"/>
</dbReference>
<dbReference type="RNAct" id="O55208">
    <property type="molecule type" value="protein"/>
</dbReference>
<dbReference type="Bgee" id="ENSMUSG00000030001">
    <property type="expression patterns" value="Expressed in primary oocyte and 17 other cell types or tissues"/>
</dbReference>
<dbReference type="ExpressionAtlas" id="O55208">
    <property type="expression patterns" value="baseline and differential"/>
</dbReference>
<dbReference type="GO" id="GO:0005634">
    <property type="term" value="C:nucleus"/>
    <property type="evidence" value="ECO:0007669"/>
    <property type="project" value="UniProtKB-SubCell"/>
</dbReference>
<dbReference type="GO" id="GO:0005667">
    <property type="term" value="C:transcription regulator complex"/>
    <property type="evidence" value="ECO:0000250"/>
    <property type="project" value="UniProtKB"/>
</dbReference>
<dbReference type="GO" id="GO:0043425">
    <property type="term" value="F:bHLH transcription factor binding"/>
    <property type="evidence" value="ECO:0000250"/>
    <property type="project" value="UniProtKB"/>
</dbReference>
<dbReference type="GO" id="GO:0001228">
    <property type="term" value="F:DNA-binding transcription activator activity, RNA polymerase II-specific"/>
    <property type="evidence" value="ECO:0000314"/>
    <property type="project" value="NTNU_SB"/>
</dbReference>
<dbReference type="GO" id="GO:0070888">
    <property type="term" value="F:E-box binding"/>
    <property type="evidence" value="ECO:0007669"/>
    <property type="project" value="Ensembl"/>
</dbReference>
<dbReference type="GO" id="GO:0046983">
    <property type="term" value="F:protein dimerization activity"/>
    <property type="evidence" value="ECO:0007669"/>
    <property type="project" value="InterPro"/>
</dbReference>
<dbReference type="GO" id="GO:0000978">
    <property type="term" value="F:RNA polymerase II cis-regulatory region sequence-specific DNA binding"/>
    <property type="evidence" value="ECO:0000314"/>
    <property type="project" value="NTNU_SB"/>
</dbReference>
<dbReference type="GO" id="GO:0048477">
    <property type="term" value="P:oogenesis"/>
    <property type="evidence" value="ECO:0007669"/>
    <property type="project" value="UniProtKB-KW"/>
</dbReference>
<dbReference type="GO" id="GO:0045944">
    <property type="term" value="P:positive regulation of transcription by RNA polymerase II"/>
    <property type="evidence" value="ECO:0000314"/>
    <property type="project" value="NTNU_SB"/>
</dbReference>
<dbReference type="CDD" id="cd11422">
    <property type="entry name" value="bHLH_TS_FIGLA"/>
    <property type="match status" value="1"/>
</dbReference>
<dbReference type="FunFam" id="4.10.280.10:FF:000068">
    <property type="entry name" value="factor in the germline alpha"/>
    <property type="match status" value="1"/>
</dbReference>
<dbReference type="Gene3D" id="4.10.280.10">
    <property type="entry name" value="Helix-loop-helix DNA-binding domain"/>
    <property type="match status" value="1"/>
</dbReference>
<dbReference type="InterPro" id="IPR011598">
    <property type="entry name" value="bHLH_dom"/>
</dbReference>
<dbReference type="InterPro" id="IPR050283">
    <property type="entry name" value="E-box_TF_Regulators"/>
</dbReference>
<dbReference type="InterPro" id="IPR036638">
    <property type="entry name" value="HLH_DNA-bd_sf"/>
</dbReference>
<dbReference type="PANTHER" id="PTHR23349">
    <property type="entry name" value="BASIC HELIX-LOOP-HELIX TRANSCRIPTION FACTOR, TWIST"/>
    <property type="match status" value="1"/>
</dbReference>
<dbReference type="PANTHER" id="PTHR23349:SF57">
    <property type="entry name" value="FACTOR IN THE GERMLINE ALPHA"/>
    <property type="match status" value="1"/>
</dbReference>
<dbReference type="Pfam" id="PF00010">
    <property type="entry name" value="HLH"/>
    <property type="match status" value="1"/>
</dbReference>
<dbReference type="SMART" id="SM00353">
    <property type="entry name" value="HLH"/>
    <property type="match status" value="1"/>
</dbReference>
<dbReference type="SUPFAM" id="SSF47459">
    <property type="entry name" value="HLH, helix-loop-helix DNA-binding domain"/>
    <property type="match status" value="1"/>
</dbReference>
<dbReference type="PROSITE" id="PS50888">
    <property type="entry name" value="BHLH"/>
    <property type="match status" value="1"/>
</dbReference>
<comment type="function">
    <text evidence="3">Germ-line specific transcription factor implicated in postnatal oocyte-specific gene expression. Plays a key regulatory role in the expression of multiple oocyte-specific genes, including those that initiate folliculogenesis and those that encode the zona pellucida (ZP1, ZP2 and ZP3) required for fertilization and early embryonic survival. Essential for oocytes to survive and form primordial follicles. The persistence of FIGLA in adult females suggests that it may regulate additional pathways that are essential for normal ovarian development. Binds to the E-box (5'-CANNTG-3') of the ZPs (ZP1, ZP2, ZP3) promoters.</text>
</comment>
<comment type="subunit">
    <text>Heterodimer with TCF3/isoform E12.</text>
</comment>
<comment type="subcellular location">
    <subcellularLocation>
        <location evidence="4">Nucleus</location>
    </subcellularLocation>
</comment>
<comment type="tissue specificity">
    <text>Expressed only in the oocytes within the ovary and at lower level in the testis. Found in the resting oocytes of the primordial follicle cells, at the periphery of the ovary and in the hilar region. Also detected in growing oocytes, but at lower levels.</text>
</comment>
<comment type="developmental stage">
    <text evidence="3">Detected as early as embryonic day 13, shortly after the onset of sexual dimorphism of the gonads. Dramatically increases at the end of the embryonic development and peaks at 2 dpp, a time in ovarian development at which oocytes have become enclosed in primordial follicles. Decreases markedly by 7 and 14 days after birth. Persists, but at low level, in adult females. Not detected in male embryos, but detected in adult testes.</text>
</comment>
<comment type="disruption phenotype">
    <text evidence="3">Females display a defect in the formation of primordial follicles leading to infertility. Although embryonic gonadogenesis appeared normal, primordial follicles were not formed at birth, and massive depletion of oocytes resulted in shrunken ovaries and female sterility. Null females do not express ZP1, ZP2 or ZP3. Since its expression is oocyte-specific in females, Figla is a plausible candidate gene for primary ovarian failure in otherwise phenotypically normal women. The gene for Figla null males have normal fertility.</text>
</comment>
<gene>
    <name type="primary">Figla</name>
</gene>
<reference key="1">
    <citation type="journal article" date="1997" name="Development">
        <title>FIGalpha, a germ cell specific transcription factor involved in the coordinate expression of the zona pellucida genes.</title>
        <authorList>
            <person name="Liang L.-F."/>
            <person name="Soyal S.M."/>
            <person name="Dean J."/>
        </authorList>
    </citation>
    <scope>NUCLEOTIDE SEQUENCE [MRNA]</scope>
    <source>
        <tissue>Ovary</tissue>
    </source>
</reference>
<reference key="2">
    <citation type="journal article" date="2000" name="Development">
        <title>FIGalpha, a germ cell-specific transcription factor required for ovarian follicle formation.</title>
        <authorList>
            <person name="Soyal S.M."/>
            <person name="Amleh A."/>
            <person name="Dean J."/>
        </authorList>
    </citation>
    <scope>NUCLEOTIDE SEQUENCE [MRNA]</scope>
    <scope>DISRUPTION PHENOTYPE</scope>
    <scope>FUNCTION</scope>
    <scope>DEVELOPMENTAL STAGE</scope>
</reference>
<accession>O55208</accession>